<dbReference type="EMBL" id="AY429477">
    <property type="protein sequence ID" value="AAR06851.1"/>
    <property type="molecule type" value="mRNA"/>
</dbReference>
<dbReference type="SMR" id="Q6T7B7"/>
<dbReference type="GO" id="GO:0005576">
    <property type="term" value="C:extracellular region"/>
    <property type="evidence" value="ECO:0007669"/>
    <property type="project" value="UniProtKB-SubCell"/>
</dbReference>
<dbReference type="GO" id="GO:0030246">
    <property type="term" value="F:carbohydrate binding"/>
    <property type="evidence" value="ECO:0007669"/>
    <property type="project" value="UniProtKB-KW"/>
</dbReference>
<dbReference type="GO" id="GO:0046872">
    <property type="term" value="F:metal ion binding"/>
    <property type="evidence" value="ECO:0007669"/>
    <property type="project" value="UniProtKB-KW"/>
</dbReference>
<dbReference type="Gene3D" id="3.10.100.10">
    <property type="entry name" value="Mannose-Binding Protein A, subunit A"/>
    <property type="match status" value="1"/>
</dbReference>
<dbReference type="InterPro" id="IPR001304">
    <property type="entry name" value="C-type_lectin-like"/>
</dbReference>
<dbReference type="InterPro" id="IPR016186">
    <property type="entry name" value="C-type_lectin-like/link_sf"/>
</dbReference>
<dbReference type="InterPro" id="IPR050111">
    <property type="entry name" value="C-type_lectin/snaclec_domain"/>
</dbReference>
<dbReference type="InterPro" id="IPR016187">
    <property type="entry name" value="CTDL_fold"/>
</dbReference>
<dbReference type="PANTHER" id="PTHR22803">
    <property type="entry name" value="MANNOSE, PHOSPHOLIPASE, LECTIN RECEPTOR RELATED"/>
    <property type="match status" value="1"/>
</dbReference>
<dbReference type="Pfam" id="PF00059">
    <property type="entry name" value="Lectin_C"/>
    <property type="match status" value="1"/>
</dbReference>
<dbReference type="SMART" id="SM00034">
    <property type="entry name" value="CLECT"/>
    <property type="match status" value="1"/>
</dbReference>
<dbReference type="SUPFAM" id="SSF56436">
    <property type="entry name" value="C-type lectin-like"/>
    <property type="match status" value="1"/>
</dbReference>
<dbReference type="PROSITE" id="PS50041">
    <property type="entry name" value="C_TYPE_LECTIN_2"/>
    <property type="match status" value="1"/>
</dbReference>
<accession>Q6T7B7</accession>
<proteinExistence type="evidence at transcript level"/>
<sequence>MGRFIFISFGLLVVFFFLSGAKGSTCPFHWLPMYGLCYKIFDKLKTWNDAEMFCRKYKPGCHLASLHSKRDSIEFAEYISDYRKGWGNVWIGMWGRKEGLTCEWTDGSSTTYVAWKQNLTDHYLNKDLFCAEIVSYTGYRLWNKQDCKVKNAFLCQCGF</sequence>
<keyword id="KW-0106">Calcium</keyword>
<keyword id="KW-1015">Disulfide bond</keyword>
<keyword id="KW-0325">Glycoprotein</keyword>
<keyword id="KW-0430">Lectin</keyword>
<keyword id="KW-0479">Metal-binding</keyword>
<keyword id="KW-0964">Secreted</keyword>
<keyword id="KW-0732">Signal</keyword>
<protein>
    <recommendedName>
        <fullName>C-type lectin 1</fullName>
        <shortName>CTL</shortName>
    </recommendedName>
</protein>
<reference key="1">
    <citation type="journal article" date="2004" name="Gene">
        <title>Bitis gabonica (Gaboon viper) snake venom gland: toward a catalog for the full-length transcripts (cDNA) and proteins.</title>
        <authorList>
            <person name="Francischetti I.M.B."/>
            <person name="My-Pham V."/>
            <person name="Harrison J."/>
            <person name="Garfield M.K."/>
            <person name="Ribeiro J.M.C."/>
        </authorList>
    </citation>
    <scope>NUCLEOTIDE SEQUENCE [MRNA]</scope>
    <source>
        <tissue>Venom gland</tissue>
    </source>
</reference>
<comment type="function">
    <text evidence="1">Lectin which recognizes specific carbohydrate structures and agglutinates a variety of animal cells by binding to cell-surface glycoproteins and glycolipids. May be a calcium-dependent lectin (By similarity).</text>
</comment>
<comment type="subunit">
    <text evidence="1">Homodimer; disulfide-linked.</text>
</comment>
<comment type="subcellular location">
    <subcellularLocation>
        <location evidence="1">Secreted</location>
    </subcellularLocation>
</comment>
<comment type="tissue specificity">
    <text>Expressed by the venom gland.</text>
</comment>
<comment type="similarity">
    <text evidence="4">Belongs to the true venom lectin family.</text>
</comment>
<name>LEC1_BITGA</name>
<organism>
    <name type="scientific">Bitis gabonica</name>
    <name type="common">Gaboon adder</name>
    <name type="synonym">Gaboon viper</name>
    <dbReference type="NCBI Taxonomy" id="8694"/>
    <lineage>
        <taxon>Eukaryota</taxon>
        <taxon>Metazoa</taxon>
        <taxon>Chordata</taxon>
        <taxon>Craniata</taxon>
        <taxon>Vertebrata</taxon>
        <taxon>Euteleostomi</taxon>
        <taxon>Lepidosauria</taxon>
        <taxon>Squamata</taxon>
        <taxon>Bifurcata</taxon>
        <taxon>Unidentata</taxon>
        <taxon>Episquamata</taxon>
        <taxon>Toxicofera</taxon>
        <taxon>Serpentes</taxon>
        <taxon>Colubroidea</taxon>
        <taxon>Viperidae</taxon>
        <taxon>Viperinae</taxon>
        <taxon>Bitis</taxon>
    </lineage>
</organism>
<evidence type="ECO:0000250" key="1"/>
<evidence type="ECO:0000255" key="2"/>
<evidence type="ECO:0000255" key="3">
    <source>
        <dbReference type="PROSITE-ProRule" id="PRU00040"/>
    </source>
</evidence>
<evidence type="ECO:0000305" key="4"/>
<feature type="signal peptide" evidence="1">
    <location>
        <begin position="1"/>
        <end position="23"/>
    </location>
</feature>
<feature type="chain" id="PRO_0000355248" description="C-type lectin 1">
    <location>
        <begin position="24"/>
        <end position="159"/>
    </location>
</feature>
<feature type="domain" description="C-type lectin" evidence="3">
    <location>
        <begin position="33"/>
        <end position="156"/>
    </location>
</feature>
<feature type="short sequence motif" description="Sugar-binding">
    <location>
        <begin position="119"/>
        <end position="121"/>
    </location>
</feature>
<feature type="binding site" evidence="1">
    <location>
        <position position="121"/>
    </location>
    <ligand>
        <name>Ca(2+)</name>
        <dbReference type="ChEBI" id="CHEBI:29108"/>
    </ligand>
</feature>
<feature type="binding site" evidence="1">
    <location>
        <position position="127"/>
    </location>
    <ligand>
        <name>Ca(2+)</name>
        <dbReference type="ChEBI" id="CHEBI:29108"/>
    </ligand>
</feature>
<feature type="binding site" evidence="1">
    <location>
        <position position="143"/>
    </location>
    <ligand>
        <name>Ca(2+)</name>
        <dbReference type="ChEBI" id="CHEBI:29108"/>
    </ligand>
</feature>
<feature type="glycosylation site" description="N-linked (GlcNAc...) asparagine" evidence="2">
    <location>
        <position position="118"/>
    </location>
</feature>
<feature type="disulfide bond" evidence="3">
    <location>
        <begin position="26"/>
        <end position="37"/>
    </location>
</feature>
<feature type="disulfide bond" evidence="3">
    <location>
        <begin position="54"/>
        <end position="155"/>
    </location>
</feature>
<feature type="disulfide bond" evidence="3">
    <location>
        <begin position="61"/>
        <end position="157"/>
    </location>
</feature>
<feature type="disulfide bond" description="Interchain" evidence="3">
    <location>
        <position position="102"/>
    </location>
</feature>
<feature type="disulfide bond" evidence="3">
    <location>
        <begin position="130"/>
        <end position="147"/>
    </location>
</feature>